<comment type="catalytic activity">
    <reaction evidence="1">
        <text>(2R)-3-phosphoglycerate + ATP = (2R)-3-phospho-glyceroyl phosphate + ADP</text>
        <dbReference type="Rhea" id="RHEA:14801"/>
        <dbReference type="ChEBI" id="CHEBI:30616"/>
        <dbReference type="ChEBI" id="CHEBI:57604"/>
        <dbReference type="ChEBI" id="CHEBI:58272"/>
        <dbReference type="ChEBI" id="CHEBI:456216"/>
        <dbReference type="EC" id="2.7.2.3"/>
    </reaction>
</comment>
<comment type="pathway">
    <text evidence="1">Carbohydrate degradation; glycolysis; pyruvate from D-glyceraldehyde 3-phosphate: step 2/5.</text>
</comment>
<comment type="subunit">
    <text evidence="1">Monomer.</text>
</comment>
<comment type="subcellular location">
    <subcellularLocation>
        <location evidence="1">Cytoplasm</location>
    </subcellularLocation>
</comment>
<comment type="similarity">
    <text evidence="1">Belongs to the phosphoglycerate kinase family.</text>
</comment>
<reference key="1">
    <citation type="journal article" date="2008" name="J. Bacteriol.">
        <title>The genome sequence of the tomato-pathogenic actinomycete Clavibacter michiganensis subsp. michiganensis NCPPB382 reveals a large island involved in pathogenicity.</title>
        <authorList>
            <person name="Gartemann K.-H."/>
            <person name="Abt B."/>
            <person name="Bekel T."/>
            <person name="Burger A."/>
            <person name="Engemann J."/>
            <person name="Fluegel M."/>
            <person name="Gaigalat L."/>
            <person name="Goesmann A."/>
            <person name="Graefen I."/>
            <person name="Kalinowski J."/>
            <person name="Kaup O."/>
            <person name="Kirchner O."/>
            <person name="Krause L."/>
            <person name="Linke B."/>
            <person name="McHardy A."/>
            <person name="Meyer F."/>
            <person name="Pohle S."/>
            <person name="Rueckert C."/>
            <person name="Schneiker S."/>
            <person name="Zellermann E.-M."/>
            <person name="Puehler A."/>
            <person name="Eichenlaub R."/>
            <person name="Kaiser O."/>
            <person name="Bartels D."/>
        </authorList>
    </citation>
    <scope>NUCLEOTIDE SEQUENCE [LARGE SCALE GENOMIC DNA]</scope>
    <source>
        <strain>NCPPB 382</strain>
    </source>
</reference>
<organism>
    <name type="scientific">Clavibacter michiganensis subsp. michiganensis (strain NCPPB 382)</name>
    <dbReference type="NCBI Taxonomy" id="443906"/>
    <lineage>
        <taxon>Bacteria</taxon>
        <taxon>Bacillati</taxon>
        <taxon>Actinomycetota</taxon>
        <taxon>Actinomycetes</taxon>
        <taxon>Micrococcales</taxon>
        <taxon>Microbacteriaceae</taxon>
        <taxon>Clavibacter</taxon>
    </lineage>
</organism>
<protein>
    <recommendedName>
        <fullName evidence="1">Phosphoglycerate kinase</fullName>
        <ecNumber evidence="1">2.7.2.3</ecNumber>
    </recommendedName>
</protein>
<keyword id="KW-0067">ATP-binding</keyword>
<keyword id="KW-0963">Cytoplasm</keyword>
<keyword id="KW-0324">Glycolysis</keyword>
<keyword id="KW-0418">Kinase</keyword>
<keyword id="KW-0547">Nucleotide-binding</keyword>
<keyword id="KW-0808">Transferase</keyword>
<proteinExistence type="inferred from homology"/>
<feature type="chain" id="PRO_1000009605" description="Phosphoglycerate kinase">
    <location>
        <begin position="1"/>
        <end position="404"/>
    </location>
</feature>
<feature type="binding site" evidence="1">
    <location>
        <begin position="22"/>
        <end position="24"/>
    </location>
    <ligand>
        <name>substrate</name>
    </ligand>
</feature>
<feature type="binding site" evidence="1">
    <location>
        <position position="37"/>
    </location>
    <ligand>
        <name>substrate</name>
    </ligand>
</feature>
<feature type="binding site" evidence="1">
    <location>
        <begin position="60"/>
        <end position="63"/>
    </location>
    <ligand>
        <name>substrate</name>
    </ligand>
</feature>
<feature type="binding site" evidence="1">
    <location>
        <position position="119"/>
    </location>
    <ligand>
        <name>substrate</name>
    </ligand>
</feature>
<feature type="binding site" evidence="1">
    <location>
        <position position="156"/>
    </location>
    <ligand>
        <name>substrate</name>
    </ligand>
</feature>
<feature type="binding site" evidence="1">
    <location>
        <position position="206"/>
    </location>
    <ligand>
        <name>ATP</name>
        <dbReference type="ChEBI" id="CHEBI:30616"/>
    </ligand>
</feature>
<feature type="binding site" evidence="1">
    <location>
        <position position="302"/>
    </location>
    <ligand>
        <name>ATP</name>
        <dbReference type="ChEBI" id="CHEBI:30616"/>
    </ligand>
</feature>
<feature type="binding site" evidence="1">
    <location>
        <position position="333"/>
    </location>
    <ligand>
        <name>ATP</name>
        <dbReference type="ChEBI" id="CHEBI:30616"/>
    </ligand>
</feature>
<feature type="binding site" evidence="1">
    <location>
        <begin position="359"/>
        <end position="362"/>
    </location>
    <ligand>
        <name>ATP</name>
        <dbReference type="ChEBI" id="CHEBI:30616"/>
    </ligand>
</feature>
<accession>A5CRT6</accession>
<dbReference type="EC" id="2.7.2.3" evidence="1"/>
<dbReference type="EMBL" id="AM711867">
    <property type="protein sequence ID" value="CAN01799.1"/>
    <property type="molecule type" value="Genomic_DNA"/>
</dbReference>
<dbReference type="RefSeq" id="WP_012038431.1">
    <property type="nucleotide sequence ID" value="NC_009480.1"/>
</dbReference>
<dbReference type="SMR" id="A5CRT6"/>
<dbReference type="KEGG" id="cmi:CMM_1743"/>
<dbReference type="eggNOG" id="COG0126">
    <property type="taxonomic scope" value="Bacteria"/>
</dbReference>
<dbReference type="HOGENOM" id="CLU_025427_0_2_11"/>
<dbReference type="OrthoDB" id="9808460at2"/>
<dbReference type="UniPathway" id="UPA00109">
    <property type="reaction ID" value="UER00185"/>
</dbReference>
<dbReference type="Proteomes" id="UP000001564">
    <property type="component" value="Chromosome"/>
</dbReference>
<dbReference type="GO" id="GO:0005829">
    <property type="term" value="C:cytosol"/>
    <property type="evidence" value="ECO:0007669"/>
    <property type="project" value="TreeGrafter"/>
</dbReference>
<dbReference type="GO" id="GO:0043531">
    <property type="term" value="F:ADP binding"/>
    <property type="evidence" value="ECO:0007669"/>
    <property type="project" value="TreeGrafter"/>
</dbReference>
<dbReference type="GO" id="GO:0005524">
    <property type="term" value="F:ATP binding"/>
    <property type="evidence" value="ECO:0007669"/>
    <property type="project" value="UniProtKB-KW"/>
</dbReference>
<dbReference type="GO" id="GO:0004618">
    <property type="term" value="F:phosphoglycerate kinase activity"/>
    <property type="evidence" value="ECO:0007669"/>
    <property type="project" value="UniProtKB-UniRule"/>
</dbReference>
<dbReference type="GO" id="GO:0006094">
    <property type="term" value="P:gluconeogenesis"/>
    <property type="evidence" value="ECO:0007669"/>
    <property type="project" value="TreeGrafter"/>
</dbReference>
<dbReference type="GO" id="GO:0006096">
    <property type="term" value="P:glycolytic process"/>
    <property type="evidence" value="ECO:0007669"/>
    <property type="project" value="UniProtKB-UniRule"/>
</dbReference>
<dbReference type="CDD" id="cd00318">
    <property type="entry name" value="Phosphoglycerate_kinase"/>
    <property type="match status" value="1"/>
</dbReference>
<dbReference type="FunFam" id="3.40.50.1260:FF:000006">
    <property type="entry name" value="Phosphoglycerate kinase"/>
    <property type="match status" value="1"/>
</dbReference>
<dbReference type="FunFam" id="3.40.50.1260:FF:000031">
    <property type="entry name" value="Phosphoglycerate kinase 1"/>
    <property type="match status" value="1"/>
</dbReference>
<dbReference type="Gene3D" id="3.40.50.1260">
    <property type="entry name" value="Phosphoglycerate kinase, N-terminal domain"/>
    <property type="match status" value="2"/>
</dbReference>
<dbReference type="HAMAP" id="MF_00145">
    <property type="entry name" value="Phosphoglyc_kinase"/>
    <property type="match status" value="1"/>
</dbReference>
<dbReference type="InterPro" id="IPR001576">
    <property type="entry name" value="Phosphoglycerate_kinase"/>
</dbReference>
<dbReference type="InterPro" id="IPR015911">
    <property type="entry name" value="Phosphoglycerate_kinase_CS"/>
</dbReference>
<dbReference type="InterPro" id="IPR015824">
    <property type="entry name" value="Phosphoglycerate_kinase_N"/>
</dbReference>
<dbReference type="InterPro" id="IPR036043">
    <property type="entry name" value="Phosphoglycerate_kinase_sf"/>
</dbReference>
<dbReference type="PANTHER" id="PTHR11406">
    <property type="entry name" value="PHOSPHOGLYCERATE KINASE"/>
    <property type="match status" value="1"/>
</dbReference>
<dbReference type="PANTHER" id="PTHR11406:SF23">
    <property type="entry name" value="PHOSPHOGLYCERATE KINASE 1, CHLOROPLASTIC-RELATED"/>
    <property type="match status" value="1"/>
</dbReference>
<dbReference type="Pfam" id="PF00162">
    <property type="entry name" value="PGK"/>
    <property type="match status" value="1"/>
</dbReference>
<dbReference type="PIRSF" id="PIRSF000724">
    <property type="entry name" value="Pgk"/>
    <property type="match status" value="1"/>
</dbReference>
<dbReference type="PRINTS" id="PR00477">
    <property type="entry name" value="PHGLYCKINASE"/>
</dbReference>
<dbReference type="SUPFAM" id="SSF53748">
    <property type="entry name" value="Phosphoglycerate kinase"/>
    <property type="match status" value="1"/>
</dbReference>
<dbReference type="PROSITE" id="PS00111">
    <property type="entry name" value="PGLYCERATE_KINASE"/>
    <property type="match status" value="1"/>
</dbReference>
<sequence length="404" mass="42105">MALRTIDSLGDLRGRRVIVRCDLNVPLKDGVIGDDGRIRASLGTLTGLREAGARVVVISHLGRPDGTPDDKYSLRPVAARLGELLGADVAFASDTVGDSARAAVEALGDGDVVVLENLRFHAEETSKDETVRRGFAESLAELGDVFVSDGFGVVHRKQASVFELASALPSAAGSLIASELEVLDRLTENPERPYTVVLGGSKVSDKLGVIGHLLPRVDSLLIGGGMLFTFLKAQGHEVGASLLEEDQVETVKGYLAEAEERGVKIVLPTDVVVADGFSADAAHEVTRADAIEGTPAGAKGLGLDIGPETADAFATIIRGSTTVFWNGPMGVFELEPFAAGTKTVADALTRVEGLSVVGGGDSAAAVRALGFDDDRFGHISTGGGASLEFLEGKRLPGLEVLGWQ</sequence>
<evidence type="ECO:0000255" key="1">
    <source>
        <dbReference type="HAMAP-Rule" id="MF_00145"/>
    </source>
</evidence>
<name>PGK_CLAM3</name>
<gene>
    <name evidence="1" type="primary">pgk</name>
    <name type="ordered locus">CMM_1743</name>
</gene>